<gene>
    <name evidence="1" type="primary">rpsD</name>
    <name type="ordered locus">EAT1b_0691</name>
</gene>
<dbReference type="EMBL" id="CP001615">
    <property type="protein sequence ID" value="ACQ69622.1"/>
    <property type="molecule type" value="Genomic_DNA"/>
</dbReference>
<dbReference type="RefSeq" id="WP_012726741.1">
    <property type="nucleotide sequence ID" value="NC_012673.1"/>
</dbReference>
<dbReference type="SMR" id="C4L4A0"/>
<dbReference type="STRING" id="360911.EAT1b_0691"/>
<dbReference type="KEGG" id="eat:EAT1b_0691"/>
<dbReference type="eggNOG" id="COG0522">
    <property type="taxonomic scope" value="Bacteria"/>
</dbReference>
<dbReference type="HOGENOM" id="CLU_092403_0_1_9"/>
<dbReference type="OrthoDB" id="9803672at2"/>
<dbReference type="Proteomes" id="UP000000716">
    <property type="component" value="Chromosome"/>
</dbReference>
<dbReference type="GO" id="GO:0015935">
    <property type="term" value="C:small ribosomal subunit"/>
    <property type="evidence" value="ECO:0007669"/>
    <property type="project" value="InterPro"/>
</dbReference>
<dbReference type="GO" id="GO:0019843">
    <property type="term" value="F:rRNA binding"/>
    <property type="evidence" value="ECO:0007669"/>
    <property type="project" value="UniProtKB-UniRule"/>
</dbReference>
<dbReference type="GO" id="GO:0003735">
    <property type="term" value="F:structural constituent of ribosome"/>
    <property type="evidence" value="ECO:0007669"/>
    <property type="project" value="InterPro"/>
</dbReference>
<dbReference type="GO" id="GO:0042274">
    <property type="term" value="P:ribosomal small subunit biogenesis"/>
    <property type="evidence" value="ECO:0007669"/>
    <property type="project" value="TreeGrafter"/>
</dbReference>
<dbReference type="GO" id="GO:0006412">
    <property type="term" value="P:translation"/>
    <property type="evidence" value="ECO:0007669"/>
    <property type="project" value="UniProtKB-UniRule"/>
</dbReference>
<dbReference type="CDD" id="cd00165">
    <property type="entry name" value="S4"/>
    <property type="match status" value="1"/>
</dbReference>
<dbReference type="FunFam" id="3.10.290.10:FF:000001">
    <property type="entry name" value="30S ribosomal protein S4"/>
    <property type="match status" value="1"/>
</dbReference>
<dbReference type="Gene3D" id="1.10.1050.10">
    <property type="entry name" value="Ribosomal Protein S4 Delta 41, Chain A, domain 1"/>
    <property type="match status" value="1"/>
</dbReference>
<dbReference type="Gene3D" id="3.10.290.10">
    <property type="entry name" value="RNA-binding S4 domain"/>
    <property type="match status" value="1"/>
</dbReference>
<dbReference type="HAMAP" id="MF_01306_B">
    <property type="entry name" value="Ribosomal_uS4_B"/>
    <property type="match status" value="1"/>
</dbReference>
<dbReference type="InterPro" id="IPR022801">
    <property type="entry name" value="Ribosomal_uS4"/>
</dbReference>
<dbReference type="InterPro" id="IPR005709">
    <property type="entry name" value="Ribosomal_uS4_bac-type"/>
</dbReference>
<dbReference type="InterPro" id="IPR018079">
    <property type="entry name" value="Ribosomal_uS4_CS"/>
</dbReference>
<dbReference type="InterPro" id="IPR001912">
    <property type="entry name" value="Ribosomal_uS4_N"/>
</dbReference>
<dbReference type="InterPro" id="IPR002942">
    <property type="entry name" value="S4_RNA-bd"/>
</dbReference>
<dbReference type="InterPro" id="IPR036986">
    <property type="entry name" value="S4_RNA-bd_sf"/>
</dbReference>
<dbReference type="NCBIfam" id="NF003717">
    <property type="entry name" value="PRK05327.1"/>
    <property type="match status" value="1"/>
</dbReference>
<dbReference type="NCBIfam" id="TIGR01017">
    <property type="entry name" value="rpsD_bact"/>
    <property type="match status" value="1"/>
</dbReference>
<dbReference type="PANTHER" id="PTHR11831">
    <property type="entry name" value="30S 40S RIBOSOMAL PROTEIN"/>
    <property type="match status" value="1"/>
</dbReference>
<dbReference type="PANTHER" id="PTHR11831:SF4">
    <property type="entry name" value="SMALL RIBOSOMAL SUBUNIT PROTEIN US4M"/>
    <property type="match status" value="1"/>
</dbReference>
<dbReference type="Pfam" id="PF00163">
    <property type="entry name" value="Ribosomal_S4"/>
    <property type="match status" value="1"/>
</dbReference>
<dbReference type="Pfam" id="PF01479">
    <property type="entry name" value="S4"/>
    <property type="match status" value="1"/>
</dbReference>
<dbReference type="SMART" id="SM01390">
    <property type="entry name" value="Ribosomal_S4"/>
    <property type="match status" value="1"/>
</dbReference>
<dbReference type="SMART" id="SM00363">
    <property type="entry name" value="S4"/>
    <property type="match status" value="1"/>
</dbReference>
<dbReference type="SUPFAM" id="SSF55174">
    <property type="entry name" value="Alpha-L RNA-binding motif"/>
    <property type="match status" value="1"/>
</dbReference>
<dbReference type="PROSITE" id="PS00632">
    <property type="entry name" value="RIBOSOMAL_S4"/>
    <property type="match status" value="1"/>
</dbReference>
<dbReference type="PROSITE" id="PS50889">
    <property type="entry name" value="S4"/>
    <property type="match status" value="1"/>
</dbReference>
<organism>
    <name type="scientific">Exiguobacterium sp. (strain ATCC BAA-1283 / AT1b)</name>
    <dbReference type="NCBI Taxonomy" id="360911"/>
    <lineage>
        <taxon>Bacteria</taxon>
        <taxon>Bacillati</taxon>
        <taxon>Bacillota</taxon>
        <taxon>Bacilli</taxon>
        <taxon>Bacillales</taxon>
        <taxon>Bacillales Family XII. Incertae Sedis</taxon>
        <taxon>Exiguobacterium</taxon>
    </lineage>
</organism>
<reference key="1">
    <citation type="journal article" date="2011" name="J. Bacteriol.">
        <title>Complete genome sequence of the Thermophilic Bacterium Exiguobacterium sp. AT1b.</title>
        <authorList>
            <person name="Vishnivetskaya T.A."/>
            <person name="Lucas S."/>
            <person name="Copeland A."/>
            <person name="Lapidus A."/>
            <person name="Glavina del Rio T."/>
            <person name="Dalin E."/>
            <person name="Tice H."/>
            <person name="Bruce D.C."/>
            <person name="Goodwin L.A."/>
            <person name="Pitluck S."/>
            <person name="Saunders E."/>
            <person name="Brettin T."/>
            <person name="Detter C."/>
            <person name="Han C."/>
            <person name="Larimer F."/>
            <person name="Land M.L."/>
            <person name="Hauser L.J."/>
            <person name="Kyrpides N.C."/>
            <person name="Ovchinnikova G."/>
            <person name="Kathariou S."/>
            <person name="Ramaley R.F."/>
            <person name="Rodrigues D.F."/>
            <person name="Hendrix C."/>
            <person name="Richardson P."/>
            <person name="Tiedje J.M."/>
        </authorList>
    </citation>
    <scope>NUCLEOTIDE SEQUENCE [LARGE SCALE GENOMIC DNA]</scope>
    <source>
        <strain>ATCC BAA-1283 / AT1b</strain>
    </source>
</reference>
<feature type="chain" id="PRO_1000214290" description="Small ribosomal subunit protein uS4">
    <location>
        <begin position="1"/>
        <end position="199"/>
    </location>
</feature>
<feature type="domain" description="S4 RNA-binding" evidence="1">
    <location>
        <begin position="91"/>
        <end position="151"/>
    </location>
</feature>
<proteinExistence type="inferred from homology"/>
<comment type="function">
    <text evidence="1">One of the primary rRNA binding proteins, it binds directly to 16S rRNA where it nucleates assembly of the body of the 30S subunit.</text>
</comment>
<comment type="function">
    <text evidence="1">With S5 and S12 plays an important role in translational accuracy.</text>
</comment>
<comment type="subunit">
    <text evidence="1">Part of the 30S ribosomal subunit. Contacts protein S5. The interaction surface between S4 and S5 is involved in control of translational fidelity.</text>
</comment>
<comment type="similarity">
    <text evidence="1">Belongs to the universal ribosomal protein uS4 family.</text>
</comment>
<protein>
    <recommendedName>
        <fullName evidence="1">Small ribosomal subunit protein uS4</fullName>
    </recommendedName>
    <alternativeName>
        <fullName evidence="2">30S ribosomal protein S4</fullName>
    </alternativeName>
</protein>
<evidence type="ECO:0000255" key="1">
    <source>
        <dbReference type="HAMAP-Rule" id="MF_01306"/>
    </source>
</evidence>
<evidence type="ECO:0000305" key="2"/>
<accession>C4L4A0</accession>
<keyword id="KW-0687">Ribonucleoprotein</keyword>
<keyword id="KW-0689">Ribosomal protein</keyword>
<keyword id="KW-0694">RNA-binding</keyword>
<keyword id="KW-0699">rRNA-binding</keyword>
<name>RS4_EXISA</name>
<sequence length="199" mass="22674">MARYTGPAWKLSRRLGISLSETGKELAKRPYAPGQHGNGRKKISEYDLQLQAKQALRHMYGVNEKQFRRIFNDAGKMPGIHGENFMFLLESRLDNLVYRFGLARTRRGARQLVNHGHITVDGSRVDIASYRVKPGQVIAVREKSKNVKAIAEALEVAPATKDFVSFDAEKLEGTFVRLPERAELNDQIKEQLIVEYYSR</sequence>